<feature type="chain" id="PRO_0000358844" description="Transcription factor FER-LIKE IRON DEFICIENCY-INDUCED TRANSCRIPTION FACTOR">
    <location>
        <begin position="1"/>
        <end position="318"/>
    </location>
</feature>
<feature type="domain" description="bHLH" evidence="1">
    <location>
        <begin position="127"/>
        <end position="176"/>
    </location>
</feature>
<feature type="region of interest" description="Disordered" evidence="2">
    <location>
        <begin position="90"/>
        <end position="138"/>
    </location>
</feature>
<feature type="compositionally biased region" description="Acidic residues" evidence="2">
    <location>
        <begin position="100"/>
        <end position="111"/>
    </location>
</feature>
<feature type="compositionally biased region" description="Basic and acidic residues" evidence="2">
    <location>
        <begin position="121"/>
        <end position="136"/>
    </location>
</feature>
<feature type="sequence conflict" description="In Ref. 1; AAM10938." evidence="9" ref="1">
    <original>S</original>
    <variation>C</variation>
    <location>
        <position position="55"/>
    </location>
</feature>
<feature type="sequence conflict" description="In Ref. 1; AAM10938." evidence="9" ref="1">
    <original>M</original>
    <variation>V</variation>
    <location>
        <position position="160"/>
    </location>
</feature>
<feature type="sequence conflict" description="In Ref. 1; AAM10938." evidence="9" ref="1">
    <original>K</original>
    <variation>E</variation>
    <location>
        <position position="223"/>
    </location>
</feature>
<feature type="sequence conflict" description="In Ref. 1; AAM10938." evidence="9" ref="1">
    <original>K</original>
    <variation>R</variation>
    <location>
        <position position="299"/>
    </location>
</feature>
<protein>
    <recommendedName>
        <fullName>Transcription factor FER-LIKE IRON DEFICIENCY-INDUCED TRANSCRIPTION FACTOR</fullName>
    </recommendedName>
    <alternativeName>
        <fullName>Basic helix-loop-helix protein 29</fullName>
        <shortName>AtbHLH29</shortName>
        <shortName>bHLH 29</shortName>
    </alternativeName>
    <alternativeName>
        <fullName>FER-LIKE REGULATOR OF IRON UPTAKE</fullName>
    </alternativeName>
    <alternativeName>
        <fullName>Transcription factor EN 43</fullName>
    </alternativeName>
    <alternativeName>
        <fullName>Transcription factor Fe-DEFICIENCY INDUCED TRANSCRIPTION FACTOR 1</fullName>
    </alternativeName>
    <alternativeName>
        <fullName>bHLH transcription factor bHLH029</fullName>
    </alternativeName>
</protein>
<proteinExistence type="evidence at protein level"/>
<reference key="1">
    <citation type="journal article" date="2003" name="Mol. Biol. Evol.">
        <title>The basic helix-loop-helix transcription factor family in plants: a genome-wide study of protein structure and functional diversity.</title>
        <authorList>
            <person name="Heim M.A."/>
            <person name="Jakoby M."/>
            <person name="Werber M."/>
            <person name="Martin C."/>
            <person name="Weisshaar B."/>
            <person name="Bailey P.C."/>
        </authorList>
    </citation>
    <scope>NUCLEOTIDE SEQUENCE [MRNA]</scope>
    <scope>TISSUE SPECIFICITY</scope>
    <scope>INDUCTION</scope>
    <scope>GENE FAMILY</scope>
    <scope>NOMENCLATURE</scope>
    <source>
        <strain>cv. Columbia</strain>
        <tissue>Leaf</tissue>
    </source>
</reference>
<reference key="2">
    <citation type="journal article" date="1999" name="Nature">
        <title>Sequence and analysis of chromosome 2 of the plant Arabidopsis thaliana.</title>
        <authorList>
            <person name="Lin X."/>
            <person name="Kaul S."/>
            <person name="Rounsley S.D."/>
            <person name="Shea T.P."/>
            <person name="Benito M.-I."/>
            <person name="Town C.D."/>
            <person name="Fujii C.Y."/>
            <person name="Mason T.M."/>
            <person name="Bowman C.L."/>
            <person name="Barnstead M.E."/>
            <person name="Feldblyum T.V."/>
            <person name="Buell C.R."/>
            <person name="Ketchum K.A."/>
            <person name="Lee J.J."/>
            <person name="Ronning C.M."/>
            <person name="Koo H.L."/>
            <person name="Moffat K.S."/>
            <person name="Cronin L.A."/>
            <person name="Shen M."/>
            <person name="Pai G."/>
            <person name="Van Aken S."/>
            <person name="Umayam L."/>
            <person name="Tallon L.J."/>
            <person name="Gill J.E."/>
            <person name="Adams M.D."/>
            <person name="Carrera A.J."/>
            <person name="Creasy T.H."/>
            <person name="Goodman H.M."/>
            <person name="Somerville C.R."/>
            <person name="Copenhaver G.P."/>
            <person name="Preuss D."/>
            <person name="Nierman W.C."/>
            <person name="White O."/>
            <person name="Eisen J.A."/>
            <person name="Salzberg S.L."/>
            <person name="Fraser C.M."/>
            <person name="Venter J.C."/>
        </authorList>
    </citation>
    <scope>NUCLEOTIDE SEQUENCE [LARGE SCALE GENOMIC DNA]</scope>
    <source>
        <strain>cv. Columbia</strain>
    </source>
</reference>
<reference key="3">
    <citation type="journal article" date="2017" name="Plant J.">
        <title>Araport11: a complete reannotation of the Arabidopsis thaliana reference genome.</title>
        <authorList>
            <person name="Cheng C.Y."/>
            <person name="Krishnakumar V."/>
            <person name="Chan A.P."/>
            <person name="Thibaud-Nissen F."/>
            <person name="Schobel S."/>
            <person name="Town C.D."/>
        </authorList>
    </citation>
    <scope>GENOME REANNOTATION</scope>
    <source>
        <strain>cv. Columbia</strain>
    </source>
</reference>
<reference key="4">
    <citation type="submission" date="2006-08" db="EMBL/GenBank/DDBJ databases">
        <title>Arabidopsis ORF clones.</title>
        <authorList>
            <person name="Quinitio C."/>
            <person name="Chen H."/>
            <person name="Kim C.J."/>
            <person name="Shinn P."/>
            <person name="Ecker J.R."/>
        </authorList>
    </citation>
    <scope>NUCLEOTIDE SEQUENCE [LARGE SCALE MRNA]</scope>
    <source>
        <strain>cv. Columbia</strain>
    </source>
</reference>
<reference key="5">
    <citation type="journal article" date="2003" name="Plant Cell">
        <title>The Arabidopsis basic/helix-loop-helix transcription factor family.</title>
        <authorList>
            <person name="Toledo-Ortiz G."/>
            <person name="Huq E."/>
            <person name="Quail P.H."/>
        </authorList>
    </citation>
    <scope>GENE FAMILY</scope>
</reference>
<reference key="6">
    <citation type="journal article" date="2003" name="Plant Cell">
        <title>Update on the basic helix-loop-helix transcription factor gene family in Arabidopsis thaliana.</title>
        <authorList>
            <person name="Bailey P.C."/>
            <person name="Martin C."/>
            <person name="Toledo-Ortiz G."/>
            <person name="Quail P.H."/>
            <person name="Huq E."/>
            <person name="Heim M.A."/>
            <person name="Jakoby M."/>
            <person name="Werber M."/>
            <person name="Weisshaar B."/>
        </authorList>
    </citation>
    <scope>GENE FAMILY</scope>
    <scope>NOMENCLATURE</scope>
</reference>
<reference key="7">
    <citation type="journal article" date="2004" name="FEBS Lett.">
        <title>FRU (BHLH029) is required for induction of iron mobilization genes in Arabidopsis thaliana.</title>
        <authorList>
            <person name="Jakoby M."/>
            <person name="Wang H.-Y."/>
            <person name="Reidt W."/>
            <person name="Weisshaar B."/>
            <person name="Bauer P."/>
        </authorList>
    </citation>
    <scope>FUNCTION</scope>
    <scope>TISSUE SPECIFICITY</scope>
    <scope>INDUCTION BY IRON DEFICIENCY</scope>
</reference>
<reference key="8">
    <citation type="journal article" date="2004" name="Plant Cell">
        <title>The essential basic helix-loop-helix protein FIT1 is required for the iron deficiency response.</title>
        <authorList>
            <person name="Colangelo E.P."/>
            <person name="Guerinot M.L."/>
        </authorList>
    </citation>
    <scope>FUNCTION</scope>
    <scope>TISSUE SPECIFICITY</scope>
    <scope>INDUCTION BY IRON DEFICIENCY</scope>
</reference>
<reference key="9">
    <citation type="journal article" date="2004" name="Plant Physiol.">
        <title>Analysis of sequence, map position, and gene expression reveals conserved essential genes for iron uptake in Arabidopsis and tomato.</title>
        <authorList>
            <person name="Bauer P."/>
            <person name="Thiel T."/>
            <person name="Klatte M."/>
            <person name="Bereczky Z."/>
            <person name="Brumbarova T."/>
            <person name="Hell R."/>
            <person name="Grosse I."/>
        </authorList>
    </citation>
    <scope>REVIEW</scope>
    <scope>INDUCTION BY IRON DEFICIENCY</scope>
</reference>
<reference key="10">
    <citation type="journal article" date="2005" name="Cell Res.">
        <title>AtbHLH29 of Arabidopsis thaliana is a functional ortholog of tomato FER involved in controlling iron acquisition in strategy I plants.</title>
        <authorList>
            <person name="Yuan Y.X."/>
            <person name="Zhang J."/>
            <person name="Wang D.W."/>
            <person name="Ling H.Q."/>
        </authorList>
    </citation>
    <scope>FUNCTION</scope>
</reference>
<reference key="11">
    <citation type="journal article" date="2007" name="Plant Physiol. Biochem.">
        <title>FIT, the FER-LIKE IRON DEFICIENCY INDUCED TRANSCRIPTION FACTOR in Arabidopsis.</title>
        <authorList>
            <person name="Bauer P."/>
            <person name="Ling H.-Q."/>
            <person name="Guerinot M.L."/>
        </authorList>
    </citation>
    <scope>NOMENCLATURE</scope>
</reference>
<reference key="12">
    <citation type="journal article" date="2008" name="Plant J.">
        <title>Cytokinins negatively regulate the root iron uptake machinery in Arabidopsis through a growth-dependent pathway.</title>
        <authorList>
            <person name="Seguela M."/>
            <person name="Briat J.-F."/>
            <person name="Vert G."/>
            <person name="Curie C."/>
        </authorList>
    </citation>
    <scope>INDUCTION BY CYTOKININS</scope>
</reference>
<sequence length="318" mass="35520">MEGRVNALSNINDLELHNFLVDPNFDQFINLIRGDHQTIDENPVLDFDLGPLQNSPCFIDENQFIPTPVDDLFDELPDLDSNVAESFRSFDGDSVRAGGEEDEEDYNDGDDSSATTTNNDGTRKTKTDRSRTLISERRRRGRMKDKLYALRSLVPNITKMDKASIVGDAVLYVQELQSQAKKLKSDIAGLEASLNSTGGYQEHAPDAQKTQPFRGINPPASKKIIQMDVIQVEEKGFYVRLVCNKGEGVAPSLYKSLESLTSFQVQNSNLSSPSPDTYLLTYTLDGTCFEQSLNLPNLKLWITGSLLNQGFEFIKSFT</sequence>
<accession>Q0V7X4</accession>
<accession>Q8S3E9</accession>
<accession>Q9ZUV8</accession>
<keyword id="KW-0238">DNA-binding</keyword>
<keyword id="KW-0539">Nucleus</keyword>
<keyword id="KW-1185">Reference proteome</keyword>
<keyword id="KW-0804">Transcription</keyword>
<keyword id="KW-0805">Transcription regulation</keyword>
<name>FIT_ARATH</name>
<evidence type="ECO:0000255" key="1">
    <source>
        <dbReference type="PROSITE-ProRule" id="PRU00981"/>
    </source>
</evidence>
<evidence type="ECO:0000256" key="2">
    <source>
        <dbReference type="SAM" id="MobiDB-lite"/>
    </source>
</evidence>
<evidence type="ECO:0000269" key="3">
    <source>
    </source>
</evidence>
<evidence type="ECO:0000269" key="4">
    <source>
    </source>
</evidence>
<evidence type="ECO:0000269" key="5">
    <source>
    </source>
</evidence>
<evidence type="ECO:0000269" key="6">
    <source>
    </source>
</evidence>
<evidence type="ECO:0000269" key="7">
    <source>
    </source>
</evidence>
<evidence type="ECO:0000269" key="8">
    <source>
    </source>
</evidence>
<evidence type="ECO:0000305" key="9"/>
<gene>
    <name type="primary">FIT</name>
    <name type="synonym">BHLH29</name>
    <name type="synonym">EN43</name>
    <name type="synonym">FIT1</name>
    <name type="synonym">FRU</name>
    <name type="ordered locus">At2g28160</name>
    <name type="ORF">F24D13.5</name>
</gene>
<comment type="function">
    <text evidence="5 6 7">Transcription factor. Essential protein involved in iron uptake responses. Regulates FRO2 at the level of mRNA accumulation and IRT1 at the level of protein accumulation. Confers enhanced iron mobilization responses at low iron supply.</text>
</comment>
<comment type="subunit">
    <text evidence="9">Homodimer.</text>
</comment>
<comment type="interaction">
    <interactant intactId="EBI-1640543">
        <id>Q0V7X4</id>
    </interactant>
    <interactant intactId="EBI-622096">
        <id>Q9SI38</id>
        <label>ANR1</label>
    </interactant>
    <organismsDiffer>false</organismsDiffer>
    <experiments>3</experiments>
</comment>
<comment type="interaction">
    <interactant intactId="EBI-1640543">
        <id>Q0V7X4</id>
    </interactant>
    <interactant intactId="EBI-15198769">
        <id>Q9ZVB5</id>
        <label>BHLH100</label>
    </interactant>
    <organismsDiffer>false</organismsDiffer>
    <experiments>3</experiments>
</comment>
<comment type="interaction">
    <interactant intactId="EBI-1640543">
        <id>Q0V7X4</id>
    </interactant>
    <interactant intactId="EBI-15195485">
        <id>Q9FYE6</id>
        <label>BHLH101</label>
    </interactant>
    <organismsDiffer>false</organismsDiffer>
    <experiments>4</experiments>
</comment>
<comment type="interaction">
    <interactant intactId="EBI-1640543">
        <id>Q0V7X4</id>
    </interactant>
    <interactant intactId="EBI-15195549">
        <id>Q1PF17</id>
        <label>BHLH18</label>
    </interactant>
    <organismsDiffer>false</organismsDiffer>
    <experiments>3</experiments>
</comment>
<comment type="interaction">
    <interactant intactId="EBI-1640543">
        <id>Q0V7X4</id>
    </interactant>
    <interactant intactId="EBI-4432361">
        <id>Q56XR0</id>
        <label>BHLH71</label>
    </interactant>
    <organismsDiffer>false</organismsDiffer>
    <experiments>3</experiments>
</comment>
<comment type="interaction">
    <interactant intactId="EBI-1640543">
        <id>Q0V7X4</id>
    </interactant>
    <interactant intactId="EBI-1640553">
        <id>Q9M1K1</id>
        <label>ORG2</label>
    </interactant>
    <organismsDiffer>false</organismsDiffer>
    <experiments>5</experiments>
</comment>
<comment type="interaction">
    <interactant intactId="EBI-1640543">
        <id>Q0V7X4</id>
    </interactant>
    <interactant intactId="EBI-1640573">
        <id>Q9M1K0</id>
        <label>ORG3</label>
    </interactant>
    <organismsDiffer>false</organismsDiffer>
    <experiments>5</experiments>
</comment>
<comment type="interaction">
    <interactant intactId="EBI-1640543">
        <id>Q0V7X4</id>
    </interactant>
    <interactant intactId="EBI-15192623">
        <id>F4JCN9</id>
        <label>PRE4</label>
    </interactant>
    <organismsDiffer>false</organismsDiffer>
    <experiments>4</experiments>
</comment>
<comment type="interaction">
    <interactant intactId="EBI-1640543">
        <id>Q0V7X4</id>
    </interactant>
    <interactant intactId="EBI-541400">
        <id>Q93ZE2</id>
        <label>TGA7</label>
    </interactant>
    <organismsDiffer>false</organismsDiffer>
    <experiments>3</experiments>
</comment>
<comment type="subcellular location">
    <subcellularLocation>
        <location evidence="1">Nucleus</location>
    </subcellularLocation>
</comment>
<comment type="tissue specificity">
    <text evidence="3 5 6">Expressed in roots and inflorescence, and to a lower extent, in leaves and stems. In roots, confined to the outer cell layers, specifically in the differentiation zone. Also detected in the endodermis and inner tissues of the central cylinder.</text>
</comment>
<comment type="induction">
    <text evidence="3 4 5 6 8">In roots by iron deficiency. Repressed by cytokinins. Induced by cold, UV, ethylene (ACC), jasmonic acid (JA), flagellin, and salicylic acid (SA) treatments.</text>
</comment>
<comment type="sequence caution" evidence="9">
    <conflict type="erroneous gene model prediction">
        <sequence resource="EMBL-CDS" id="AAC98450"/>
    </conflict>
</comment>
<organism>
    <name type="scientific">Arabidopsis thaliana</name>
    <name type="common">Mouse-ear cress</name>
    <dbReference type="NCBI Taxonomy" id="3702"/>
    <lineage>
        <taxon>Eukaryota</taxon>
        <taxon>Viridiplantae</taxon>
        <taxon>Streptophyta</taxon>
        <taxon>Embryophyta</taxon>
        <taxon>Tracheophyta</taxon>
        <taxon>Spermatophyta</taxon>
        <taxon>Magnoliopsida</taxon>
        <taxon>eudicotyledons</taxon>
        <taxon>Gunneridae</taxon>
        <taxon>Pentapetalae</taxon>
        <taxon>rosids</taxon>
        <taxon>malvids</taxon>
        <taxon>Brassicales</taxon>
        <taxon>Brassicaceae</taxon>
        <taxon>Camelineae</taxon>
        <taxon>Arabidopsis</taxon>
    </lineage>
</organism>
<dbReference type="EMBL" id="AF488570">
    <property type="protein sequence ID" value="AAM10938.1"/>
    <property type="molecule type" value="mRNA"/>
</dbReference>
<dbReference type="EMBL" id="AC005851">
    <property type="protein sequence ID" value="AAC98450.1"/>
    <property type="status" value="ALT_SEQ"/>
    <property type="molecule type" value="Genomic_DNA"/>
</dbReference>
<dbReference type="EMBL" id="CP002685">
    <property type="protein sequence ID" value="AEC08086.1"/>
    <property type="molecule type" value="Genomic_DNA"/>
</dbReference>
<dbReference type="EMBL" id="BT026446">
    <property type="protein sequence ID" value="ABH04553.1"/>
    <property type="molecule type" value="mRNA"/>
</dbReference>
<dbReference type="PIR" id="E84681">
    <property type="entry name" value="E84681"/>
</dbReference>
<dbReference type="RefSeq" id="NP_850114.1">
    <property type="nucleotide sequence ID" value="NM_179783.2"/>
</dbReference>
<dbReference type="SMR" id="Q0V7X4"/>
<dbReference type="BioGRID" id="2712">
    <property type="interactions" value="28"/>
</dbReference>
<dbReference type="FunCoup" id="Q0V7X4">
    <property type="interactions" value="246"/>
</dbReference>
<dbReference type="IntAct" id="Q0V7X4">
    <property type="interactions" value="27"/>
</dbReference>
<dbReference type="STRING" id="3702.Q0V7X4"/>
<dbReference type="PaxDb" id="3702-AT2G28160.1"/>
<dbReference type="EnsemblPlants" id="AT2G28160.1">
    <property type="protein sequence ID" value="AT2G28160.1"/>
    <property type="gene ID" value="AT2G28160"/>
</dbReference>
<dbReference type="GeneID" id="817362"/>
<dbReference type="Gramene" id="AT2G28160.1">
    <property type="protein sequence ID" value="AT2G28160.1"/>
    <property type="gene ID" value="AT2G28160"/>
</dbReference>
<dbReference type="KEGG" id="ath:AT2G28160"/>
<dbReference type="Araport" id="AT2G28160"/>
<dbReference type="TAIR" id="AT2G28160">
    <property type="gene designation" value="FIT"/>
</dbReference>
<dbReference type="eggNOG" id="ENOG502QSJP">
    <property type="taxonomic scope" value="Eukaryota"/>
</dbReference>
<dbReference type="HOGENOM" id="CLU_864384_0_0_1"/>
<dbReference type="InParanoid" id="Q0V7X4"/>
<dbReference type="OMA" id="DANCDFG"/>
<dbReference type="OrthoDB" id="1886792at2759"/>
<dbReference type="PhylomeDB" id="Q0V7X4"/>
<dbReference type="PRO" id="PR:Q0V7X4"/>
<dbReference type="Proteomes" id="UP000006548">
    <property type="component" value="Chromosome 2"/>
</dbReference>
<dbReference type="ExpressionAtlas" id="Q0V7X4">
    <property type="expression patterns" value="baseline and differential"/>
</dbReference>
<dbReference type="GO" id="GO:0005634">
    <property type="term" value="C:nucleus"/>
    <property type="evidence" value="ECO:0007669"/>
    <property type="project" value="UniProtKB-SubCell"/>
</dbReference>
<dbReference type="GO" id="GO:0003677">
    <property type="term" value="F:DNA binding"/>
    <property type="evidence" value="ECO:0007669"/>
    <property type="project" value="UniProtKB-KW"/>
</dbReference>
<dbReference type="GO" id="GO:0003700">
    <property type="term" value="F:DNA-binding transcription factor activity"/>
    <property type="evidence" value="ECO:0000250"/>
    <property type="project" value="TAIR"/>
</dbReference>
<dbReference type="GO" id="GO:0046983">
    <property type="term" value="F:protein dimerization activity"/>
    <property type="evidence" value="ECO:0007669"/>
    <property type="project" value="InterPro"/>
</dbReference>
<dbReference type="GO" id="GO:0006355">
    <property type="term" value="P:regulation of DNA-templated transcription"/>
    <property type="evidence" value="ECO:0000304"/>
    <property type="project" value="TAIR"/>
</dbReference>
<dbReference type="GO" id="GO:0034756">
    <property type="term" value="P:regulation of iron ion transport"/>
    <property type="evidence" value="ECO:0000315"/>
    <property type="project" value="TAIR"/>
</dbReference>
<dbReference type="GO" id="GO:0010039">
    <property type="term" value="P:response to iron ion"/>
    <property type="evidence" value="ECO:0000315"/>
    <property type="project" value="TAIR"/>
</dbReference>
<dbReference type="CDD" id="cd11450">
    <property type="entry name" value="bHLH_AtFIT_like"/>
    <property type="match status" value="1"/>
</dbReference>
<dbReference type="FunFam" id="4.10.280.10:FF:000096">
    <property type="entry name" value="Basic helix-loop-helix (BHLH) DNA-binding superfamily protein"/>
    <property type="match status" value="1"/>
</dbReference>
<dbReference type="Gene3D" id="4.10.280.10">
    <property type="entry name" value="Helix-loop-helix DNA-binding domain"/>
    <property type="match status" value="1"/>
</dbReference>
<dbReference type="InterPro" id="IPR011598">
    <property type="entry name" value="bHLH_dom"/>
</dbReference>
<dbReference type="InterPro" id="IPR036638">
    <property type="entry name" value="HLH_DNA-bd_sf"/>
</dbReference>
<dbReference type="InterPro" id="IPR051358">
    <property type="entry name" value="TF_AMS/ICE1/BHLH6-like"/>
</dbReference>
<dbReference type="PANTHER" id="PTHR31945:SF17">
    <property type="entry name" value="TRANSCRIPTION FACTOR FER-LIKE IRON DEFICIENCY-INDUCED TRANSCRIPTION FACTOR"/>
    <property type="match status" value="1"/>
</dbReference>
<dbReference type="PANTHER" id="PTHR31945">
    <property type="entry name" value="TRANSCRIPTION FACTOR SCREAM2-RELATED"/>
    <property type="match status" value="1"/>
</dbReference>
<dbReference type="Pfam" id="PF00010">
    <property type="entry name" value="HLH"/>
    <property type="match status" value="1"/>
</dbReference>
<dbReference type="SMART" id="SM00353">
    <property type="entry name" value="HLH"/>
    <property type="match status" value="1"/>
</dbReference>
<dbReference type="SUPFAM" id="SSF47459">
    <property type="entry name" value="HLH, helix-loop-helix DNA-binding domain"/>
    <property type="match status" value="1"/>
</dbReference>
<dbReference type="PROSITE" id="PS50888">
    <property type="entry name" value="BHLH"/>
    <property type="match status" value="1"/>
</dbReference>